<gene>
    <name evidence="1" type="primary">panB</name>
    <name type="ordered locus">P9515_14711</name>
</gene>
<evidence type="ECO:0000255" key="1">
    <source>
        <dbReference type="HAMAP-Rule" id="MF_00156"/>
    </source>
</evidence>
<feature type="chain" id="PRO_0000297327" description="3-methyl-2-oxobutanoate hydroxymethyltransferase">
    <location>
        <begin position="1"/>
        <end position="257"/>
    </location>
</feature>
<feature type="active site" description="Proton acceptor" evidence="1">
    <location>
        <position position="185"/>
    </location>
</feature>
<feature type="binding site" evidence="1">
    <location>
        <begin position="42"/>
        <end position="43"/>
    </location>
    <ligand>
        <name>3-methyl-2-oxobutanoate</name>
        <dbReference type="ChEBI" id="CHEBI:11851"/>
    </ligand>
</feature>
<feature type="binding site" evidence="1">
    <location>
        <position position="42"/>
    </location>
    <ligand>
        <name>Mg(2+)</name>
        <dbReference type="ChEBI" id="CHEBI:18420"/>
    </ligand>
</feature>
<feature type="binding site" evidence="1">
    <location>
        <position position="86"/>
    </location>
    <ligand>
        <name>3-methyl-2-oxobutanoate</name>
        <dbReference type="ChEBI" id="CHEBI:11851"/>
    </ligand>
</feature>
<feature type="binding site" evidence="1">
    <location>
        <position position="86"/>
    </location>
    <ligand>
        <name>Mg(2+)</name>
        <dbReference type="ChEBI" id="CHEBI:18420"/>
    </ligand>
</feature>
<feature type="binding site" evidence="1">
    <location>
        <position position="116"/>
    </location>
    <ligand>
        <name>3-methyl-2-oxobutanoate</name>
        <dbReference type="ChEBI" id="CHEBI:11851"/>
    </ligand>
</feature>
<feature type="binding site" evidence="1">
    <location>
        <position position="118"/>
    </location>
    <ligand>
        <name>Mg(2+)</name>
        <dbReference type="ChEBI" id="CHEBI:18420"/>
    </ligand>
</feature>
<comment type="function">
    <text evidence="1">Catalyzes the reversible reaction in which hydroxymethyl group from 5,10-methylenetetrahydrofolate is transferred onto alpha-ketoisovalerate to form ketopantoate.</text>
</comment>
<comment type="catalytic activity">
    <reaction evidence="1">
        <text>3-methyl-2-oxobutanoate + (6R)-5,10-methylene-5,6,7,8-tetrahydrofolate + H2O = 2-dehydropantoate + (6S)-5,6,7,8-tetrahydrofolate</text>
        <dbReference type="Rhea" id="RHEA:11824"/>
        <dbReference type="ChEBI" id="CHEBI:11561"/>
        <dbReference type="ChEBI" id="CHEBI:11851"/>
        <dbReference type="ChEBI" id="CHEBI:15377"/>
        <dbReference type="ChEBI" id="CHEBI:15636"/>
        <dbReference type="ChEBI" id="CHEBI:57453"/>
        <dbReference type="EC" id="2.1.2.11"/>
    </reaction>
</comment>
<comment type="cofactor">
    <cofactor evidence="1">
        <name>Mg(2+)</name>
        <dbReference type="ChEBI" id="CHEBI:18420"/>
    </cofactor>
    <text evidence="1">Binds 1 Mg(2+) ion per subunit.</text>
</comment>
<comment type="pathway">
    <text evidence="1">Cofactor biosynthesis; (R)-pantothenate biosynthesis; (R)-pantoate from 3-methyl-2-oxobutanoate: step 1/2.</text>
</comment>
<comment type="subunit">
    <text evidence="1">Homodecamer; pentamer of dimers.</text>
</comment>
<comment type="subcellular location">
    <subcellularLocation>
        <location evidence="1">Cytoplasm</location>
    </subcellularLocation>
</comment>
<comment type="similarity">
    <text evidence="1">Belongs to the PanB family.</text>
</comment>
<keyword id="KW-0963">Cytoplasm</keyword>
<keyword id="KW-0460">Magnesium</keyword>
<keyword id="KW-0479">Metal-binding</keyword>
<keyword id="KW-0566">Pantothenate biosynthesis</keyword>
<keyword id="KW-0808">Transferase</keyword>
<reference key="1">
    <citation type="journal article" date="2007" name="PLoS Genet.">
        <title>Patterns and implications of gene gain and loss in the evolution of Prochlorococcus.</title>
        <authorList>
            <person name="Kettler G.C."/>
            <person name="Martiny A.C."/>
            <person name="Huang K."/>
            <person name="Zucker J."/>
            <person name="Coleman M.L."/>
            <person name="Rodrigue S."/>
            <person name="Chen F."/>
            <person name="Lapidus A."/>
            <person name="Ferriera S."/>
            <person name="Johnson J."/>
            <person name="Steglich C."/>
            <person name="Church G.M."/>
            <person name="Richardson P."/>
            <person name="Chisholm S.W."/>
        </authorList>
    </citation>
    <scope>NUCLEOTIDE SEQUENCE [LARGE SCALE GENOMIC DNA]</scope>
    <source>
        <strain>MIT 9515</strain>
    </source>
</reference>
<accession>A2BY17</accession>
<name>PANB_PROM5</name>
<protein>
    <recommendedName>
        <fullName evidence="1">3-methyl-2-oxobutanoate hydroxymethyltransferase</fullName>
        <ecNumber evidence="1">2.1.2.11</ecNumber>
    </recommendedName>
    <alternativeName>
        <fullName evidence="1">Ketopantoate hydroxymethyltransferase</fullName>
        <shortName evidence="1">KPHMT</shortName>
    </alternativeName>
</protein>
<proteinExistence type="inferred from homology"/>
<dbReference type="EC" id="2.1.2.11" evidence="1"/>
<dbReference type="EMBL" id="CP000552">
    <property type="protein sequence ID" value="ABM72678.1"/>
    <property type="molecule type" value="Genomic_DNA"/>
</dbReference>
<dbReference type="RefSeq" id="WP_011820775.1">
    <property type="nucleotide sequence ID" value="NC_008817.1"/>
</dbReference>
<dbReference type="SMR" id="A2BY17"/>
<dbReference type="STRING" id="167542.P9515_14711"/>
<dbReference type="GeneID" id="60200928"/>
<dbReference type="KEGG" id="pmc:P9515_14711"/>
<dbReference type="eggNOG" id="COG0413">
    <property type="taxonomic scope" value="Bacteria"/>
</dbReference>
<dbReference type="HOGENOM" id="CLU_036645_1_0_3"/>
<dbReference type="OrthoDB" id="9781789at2"/>
<dbReference type="UniPathway" id="UPA00028">
    <property type="reaction ID" value="UER00003"/>
</dbReference>
<dbReference type="Proteomes" id="UP000001589">
    <property type="component" value="Chromosome"/>
</dbReference>
<dbReference type="GO" id="GO:0005737">
    <property type="term" value="C:cytoplasm"/>
    <property type="evidence" value="ECO:0007669"/>
    <property type="project" value="UniProtKB-SubCell"/>
</dbReference>
<dbReference type="GO" id="GO:0003864">
    <property type="term" value="F:3-methyl-2-oxobutanoate hydroxymethyltransferase activity"/>
    <property type="evidence" value="ECO:0007669"/>
    <property type="project" value="UniProtKB-UniRule"/>
</dbReference>
<dbReference type="GO" id="GO:0000287">
    <property type="term" value="F:magnesium ion binding"/>
    <property type="evidence" value="ECO:0007669"/>
    <property type="project" value="TreeGrafter"/>
</dbReference>
<dbReference type="GO" id="GO:0015940">
    <property type="term" value="P:pantothenate biosynthetic process"/>
    <property type="evidence" value="ECO:0007669"/>
    <property type="project" value="UniProtKB-UniRule"/>
</dbReference>
<dbReference type="CDD" id="cd06557">
    <property type="entry name" value="KPHMT-like"/>
    <property type="match status" value="1"/>
</dbReference>
<dbReference type="Gene3D" id="3.20.20.60">
    <property type="entry name" value="Phosphoenolpyruvate-binding domains"/>
    <property type="match status" value="1"/>
</dbReference>
<dbReference type="HAMAP" id="MF_00156">
    <property type="entry name" value="PanB"/>
    <property type="match status" value="1"/>
</dbReference>
<dbReference type="InterPro" id="IPR003700">
    <property type="entry name" value="Pantoate_hydroxy_MeTrfase"/>
</dbReference>
<dbReference type="InterPro" id="IPR015813">
    <property type="entry name" value="Pyrv/PenolPyrv_kinase-like_dom"/>
</dbReference>
<dbReference type="InterPro" id="IPR040442">
    <property type="entry name" value="Pyrv_kinase-like_dom_sf"/>
</dbReference>
<dbReference type="NCBIfam" id="TIGR00222">
    <property type="entry name" value="panB"/>
    <property type="match status" value="1"/>
</dbReference>
<dbReference type="NCBIfam" id="NF001452">
    <property type="entry name" value="PRK00311.1"/>
    <property type="match status" value="1"/>
</dbReference>
<dbReference type="PANTHER" id="PTHR20881">
    <property type="entry name" value="3-METHYL-2-OXOBUTANOATE HYDROXYMETHYLTRANSFERASE"/>
    <property type="match status" value="1"/>
</dbReference>
<dbReference type="PANTHER" id="PTHR20881:SF0">
    <property type="entry name" value="3-METHYL-2-OXOBUTANOATE HYDROXYMETHYLTRANSFERASE"/>
    <property type="match status" value="1"/>
</dbReference>
<dbReference type="Pfam" id="PF02548">
    <property type="entry name" value="Pantoate_transf"/>
    <property type="match status" value="1"/>
</dbReference>
<dbReference type="PIRSF" id="PIRSF000388">
    <property type="entry name" value="Pantoate_hydroxy_MeTrfase"/>
    <property type="match status" value="1"/>
</dbReference>
<dbReference type="SUPFAM" id="SSF51621">
    <property type="entry name" value="Phosphoenolpyruvate/pyruvate domain"/>
    <property type="match status" value="1"/>
</dbReference>
<sequence>MLPSELVKYKKNSQKIIALTAWDSISGSLAEQSGADIVLVGDSLAMVCLGYKSTLPVTLENMIYHTNAVSRGFSREIEEHSLLVCDMPFLTYQCGEDKAVEYAGKIIKNTYAKAVKIEGAEPEVQTVISRLIRMGIPVMGHLGLTPQSYLNLGLKKQGLKKESYEKIKRDALSLEKLGCFSIVLEHIPELLAKEIQTDLEIPTIGIGAGVFCDGQVRVTADLLGLSDKQPPFCKPIVDGKKYFGEKLKEWVTSERLS</sequence>
<organism>
    <name type="scientific">Prochlorococcus marinus (strain MIT 9515)</name>
    <dbReference type="NCBI Taxonomy" id="167542"/>
    <lineage>
        <taxon>Bacteria</taxon>
        <taxon>Bacillati</taxon>
        <taxon>Cyanobacteriota</taxon>
        <taxon>Cyanophyceae</taxon>
        <taxon>Synechococcales</taxon>
        <taxon>Prochlorococcaceae</taxon>
        <taxon>Prochlorococcus</taxon>
    </lineage>
</organism>